<sequence>MPRGSALSDTERAQLDVMKLLNVSLHEMSRKISRSRHCIREYLKDPVSYGTSKRAPRRKALSVRDERNVIRAASNSCKTARDIRNELQLSASKRTILNVIKRSGVIVRQKLRPAPLLSADHKLKRLEFAKNNMGTNWSKVVFSDEKKFNLDGPDGCRYYWRDLRKEPMVFSRRNFGGGTVMVWGAFTEKKKLEIQFVSSKMNSTDYQNVLELELSKYLRHYSRKDFRFQQDNATIHVSNSTRDYFKLKKINLLDWPARSPDLNPIENLWGILVRIVYAQNKTYPTVASLKQGILDAWKSIPDNQLKSLVRSMEDRLIEIIRTQGNPINY</sequence>
<proteinExistence type="evidence at protein level"/>
<feature type="chain" id="PRO_0000072445" description="Transposable element Tc3 transposase">
    <location>
        <begin position="1"/>
        <end position="329"/>
    </location>
</feature>
<feature type="DNA-binding region">
    <location>
        <begin position="2"/>
        <end position="135"/>
    </location>
</feature>
<feature type="helix" evidence="3">
    <location>
        <begin position="9"/>
        <end position="20"/>
    </location>
</feature>
<feature type="helix" evidence="3">
    <location>
        <begin position="25"/>
        <end position="32"/>
    </location>
</feature>
<feature type="helix" evidence="3">
    <location>
        <begin position="36"/>
        <end position="44"/>
    </location>
</feature>
<feature type="turn" evidence="3">
    <location>
        <begin position="47"/>
        <end position="50"/>
    </location>
</feature>
<feature type="helix" evidence="4">
    <location>
        <begin position="63"/>
        <end position="75"/>
    </location>
</feature>
<feature type="helix" evidence="4">
    <location>
        <begin position="80"/>
        <end position="86"/>
    </location>
</feature>
<feature type="helix" evidence="4">
    <location>
        <begin position="93"/>
        <end position="102"/>
    </location>
</feature>
<protein>
    <recommendedName>
        <fullName>Transposable element Tc3 transposase</fullName>
    </recommendedName>
</protein>
<reference key="1">
    <citation type="journal article" date="1992" name="Nature">
        <title>The C. elegans genome sequencing project: a beginning.</title>
        <authorList>
            <person name="Sulston J."/>
            <person name="Du Z."/>
            <person name="Thomas K."/>
            <person name="Wilson R."/>
            <person name="Hillier L."/>
            <person name="Staden R."/>
            <person name="Halloran N."/>
            <person name="Green P."/>
            <person name="Thierry-Mieg J."/>
            <person name="Qiu L."/>
            <person name="Dear S."/>
            <person name="Coulson A."/>
            <person name="Craxton M."/>
            <person name="Durbin R."/>
            <person name="Berks M."/>
            <person name="Metzstein M."/>
            <person name="Hawkins T."/>
            <person name="Ainscough R."/>
            <person name="Waterston R."/>
        </authorList>
    </citation>
    <scope>NUCLEOTIDE SEQUENCE [LARGE SCALE GENOMIC DNA]</scope>
    <source>
        <strain>Bristol N2</strain>
    </source>
</reference>
<reference key="2">
    <citation type="journal article" date="1998" name="Science">
        <title>Genome sequence of the nematode C. elegans: a platform for investigating biology.</title>
        <authorList>
            <consortium name="The C. elegans sequencing consortium"/>
        </authorList>
    </citation>
    <scope>NUCLEOTIDE SEQUENCE [LARGE SCALE GENOMIC DNA]</scope>
    <source>
        <strain>Bristol N2</strain>
    </source>
</reference>
<reference key="3">
    <citation type="journal article" date="1993" name="EMBO J.">
        <title>Mobilization of quiet, endogenous Tc3 transposons of Caenorhabditis elegans by forced expression of Tc3 transposase.</title>
        <authorList>
            <person name="van Luenen H.G.A.M."/>
            <person name="Colloms S.D."/>
            <person name="Plasterk R.H.A."/>
        </authorList>
    </citation>
    <scope>FUNCTION</scope>
</reference>
<reference key="4">
    <citation type="journal article" date="1997" name="EMBO J.">
        <title>Crystal structure of the specific DNA-binding domain of Tc3 transposase of C.elegans in complex with transposon DNA.</title>
        <authorList>
            <person name="van Pouderoyen G."/>
            <person name="Ketting R.F."/>
            <person name="Perrakis A."/>
            <person name="Plasterk R.H.A."/>
            <person name="Sixma T.K."/>
        </authorList>
    </citation>
    <scope>X-RAY CRYSTALLOGRAPHY (2.45 ANGSTROMS) OF 2-52 IN COMPLEX WITH DNA</scope>
</reference>
<reference key="5">
    <citation type="journal article" date="2004" name="Nucleic Acids Res.">
        <title>Structural analysis of the bipartite DNA-binding domain of Tc3 transposase bound to transposon DNA.</title>
        <authorList>
            <person name="Watkins S."/>
            <person name="van Pouderoyen G."/>
            <person name="Sixma T.K."/>
        </authorList>
    </citation>
    <scope>X-RAY CRYSTALLOGRAPHY (2.69 ANGSTROMS) OF 1-135 IN COMPLEX WITH DNA</scope>
</reference>
<dbReference type="EMBL" id="FO080163">
    <property type="status" value="NOT_ANNOTATED_CDS"/>
    <property type="molecule type" value="Genomic_DNA"/>
</dbReference>
<dbReference type="PIR" id="S27787">
    <property type="entry name" value="S27787"/>
</dbReference>
<dbReference type="PDB" id="1TC3">
    <property type="method" value="X-ray"/>
    <property type="resolution" value="2.45 A"/>
    <property type="chains" value="C=2-52"/>
</dbReference>
<dbReference type="PDB" id="1U78">
    <property type="method" value="X-ray"/>
    <property type="resolution" value="2.69 A"/>
    <property type="chains" value="A=1-135"/>
</dbReference>
<dbReference type="PDBsum" id="1TC3"/>
<dbReference type="PDBsum" id="1U78"/>
<dbReference type="SMR" id="P34257"/>
<dbReference type="InParanoid" id="P34257"/>
<dbReference type="EvolutionaryTrace" id="P34257"/>
<dbReference type="Proteomes" id="UP000001940">
    <property type="component" value="Chromosome III"/>
</dbReference>
<dbReference type="GO" id="GO:0005634">
    <property type="term" value="C:nucleus"/>
    <property type="evidence" value="ECO:0007669"/>
    <property type="project" value="UniProtKB-SubCell"/>
</dbReference>
<dbReference type="GO" id="GO:0003677">
    <property type="term" value="F:DNA binding"/>
    <property type="evidence" value="ECO:0007669"/>
    <property type="project" value="UniProtKB-KW"/>
</dbReference>
<dbReference type="GO" id="GO:0015074">
    <property type="term" value="P:DNA integration"/>
    <property type="evidence" value="ECO:0007669"/>
    <property type="project" value="UniProtKB-KW"/>
</dbReference>
<dbReference type="GO" id="GO:0006310">
    <property type="term" value="P:DNA recombination"/>
    <property type="evidence" value="ECO:0007669"/>
    <property type="project" value="UniProtKB-KW"/>
</dbReference>
<dbReference type="DisProt" id="DP02799"/>
<dbReference type="Gene3D" id="1.10.10.60">
    <property type="entry name" value="Homeodomain-like"/>
    <property type="match status" value="1"/>
</dbReference>
<dbReference type="Gene3D" id="3.30.420.10">
    <property type="entry name" value="Ribonuclease H-like superfamily/Ribonuclease H"/>
    <property type="match status" value="1"/>
</dbReference>
<dbReference type="Gene3D" id="1.10.10.10">
    <property type="entry name" value="Winged helix-like DNA-binding domain superfamily/Winged helix DNA-binding domain"/>
    <property type="match status" value="1"/>
</dbReference>
<dbReference type="IDEAL" id="IID50076"/>
<dbReference type="InterPro" id="IPR009057">
    <property type="entry name" value="Homeodomain-like_sf"/>
</dbReference>
<dbReference type="InterPro" id="IPR036397">
    <property type="entry name" value="RNaseH_sf"/>
</dbReference>
<dbReference type="InterPro" id="IPR038717">
    <property type="entry name" value="Tc1-like_DDE_dom"/>
</dbReference>
<dbReference type="InterPro" id="IPR025898">
    <property type="entry name" value="Tc3_transposase_DNA-bd_dom"/>
</dbReference>
<dbReference type="InterPro" id="IPR048703">
    <property type="entry name" value="Tnp_Tc3-like_HTH"/>
</dbReference>
<dbReference type="InterPro" id="IPR052338">
    <property type="entry name" value="Transposase_5"/>
</dbReference>
<dbReference type="InterPro" id="IPR036388">
    <property type="entry name" value="WH-like_DNA-bd_sf"/>
</dbReference>
<dbReference type="PANTHER" id="PTHR23022:SF129">
    <property type="entry name" value="TRANSPOSABLE ELEMENT TC3 TRANSPOSASE"/>
    <property type="match status" value="1"/>
</dbReference>
<dbReference type="PANTHER" id="PTHR23022">
    <property type="entry name" value="TRANSPOSABLE ELEMENT-RELATED"/>
    <property type="match status" value="1"/>
</dbReference>
<dbReference type="Pfam" id="PF13358">
    <property type="entry name" value="DDE_3"/>
    <property type="match status" value="1"/>
</dbReference>
<dbReference type="Pfam" id="PF11427">
    <property type="entry name" value="HTH_Tnp_Tc3_1"/>
    <property type="match status" value="1"/>
</dbReference>
<dbReference type="Pfam" id="PF21517">
    <property type="entry name" value="HTH_Tnp_Tc3_2_like"/>
    <property type="match status" value="1"/>
</dbReference>
<dbReference type="SUPFAM" id="SSF46689">
    <property type="entry name" value="Homeodomain-like"/>
    <property type="match status" value="2"/>
</dbReference>
<organism>
    <name type="scientific">Caenorhabditis elegans</name>
    <dbReference type="NCBI Taxonomy" id="6239"/>
    <lineage>
        <taxon>Eukaryota</taxon>
        <taxon>Metazoa</taxon>
        <taxon>Ecdysozoa</taxon>
        <taxon>Nematoda</taxon>
        <taxon>Chromadorea</taxon>
        <taxon>Rhabditida</taxon>
        <taxon>Rhabditina</taxon>
        <taxon>Rhabditomorpha</taxon>
        <taxon>Rhabditoidea</taxon>
        <taxon>Rhabditidae</taxon>
        <taxon>Peloderinae</taxon>
        <taxon>Caenorhabditis</taxon>
    </lineage>
</organism>
<accession>P34257</accession>
<evidence type="ECO:0000269" key="1">
    <source>
    </source>
</evidence>
<evidence type="ECO:0000305" key="2"/>
<evidence type="ECO:0007829" key="3">
    <source>
        <dbReference type="PDB" id="1TC3"/>
    </source>
</evidence>
<evidence type="ECO:0007829" key="4">
    <source>
        <dbReference type="PDB" id="1U78"/>
    </source>
</evidence>
<keyword id="KW-0002">3D-structure</keyword>
<keyword id="KW-0229">DNA integration</keyword>
<keyword id="KW-0233">DNA recombination</keyword>
<keyword id="KW-0238">DNA-binding</keyword>
<keyword id="KW-0539">Nucleus</keyword>
<keyword id="KW-1185">Reference proteome</keyword>
<keyword id="KW-0814">Transposable element</keyword>
<name>TC3A_CAEEL</name>
<comment type="function">
    <text evidence="1">Binds specifically to the terminal nucleotides of the TC3 inverted repeat. Its expression results in frequent excision and transposition of endogenous TC3 elements. TC3 transposase acts by making double strand breaks at the ends of TC3 element. The excised element would then be inserted into a target sequence.</text>
</comment>
<comment type="subunit">
    <text evidence="2">Homodimer or homotetramer.</text>
</comment>
<comment type="subcellular location">
    <subcellularLocation>
        <location>Nucleus</location>
    </subcellularLocation>
</comment>
<comment type="similarity">
    <text evidence="2">Belongs to the transposase 5 family.</text>
</comment>
<gene>
    <name type="primary">tc3a</name>
    <name type="ORF">B0303.5</name>
</gene>